<protein>
    <recommendedName>
        <fullName evidence="1">Large ribosomal subunit protein uL18</fullName>
    </recommendedName>
    <alternativeName>
        <fullName evidence="2">50S ribosomal protein L18</fullName>
    </alternativeName>
</protein>
<dbReference type="EMBL" id="CP001083">
    <property type="protein sequence ID" value="ACQ52011.1"/>
    <property type="molecule type" value="Genomic_DNA"/>
</dbReference>
<dbReference type="RefSeq" id="WP_003360204.1">
    <property type="nucleotide sequence ID" value="NC_012658.1"/>
</dbReference>
<dbReference type="SMR" id="C3KVN5"/>
<dbReference type="KEGG" id="cbi:CLJ_B3773"/>
<dbReference type="HOGENOM" id="CLU_098841_0_1_9"/>
<dbReference type="Proteomes" id="UP000002333">
    <property type="component" value="Chromosome"/>
</dbReference>
<dbReference type="GO" id="GO:0022625">
    <property type="term" value="C:cytosolic large ribosomal subunit"/>
    <property type="evidence" value="ECO:0007669"/>
    <property type="project" value="TreeGrafter"/>
</dbReference>
<dbReference type="GO" id="GO:0008097">
    <property type="term" value="F:5S rRNA binding"/>
    <property type="evidence" value="ECO:0007669"/>
    <property type="project" value="TreeGrafter"/>
</dbReference>
<dbReference type="GO" id="GO:0003735">
    <property type="term" value="F:structural constituent of ribosome"/>
    <property type="evidence" value="ECO:0007669"/>
    <property type="project" value="InterPro"/>
</dbReference>
<dbReference type="GO" id="GO:0006412">
    <property type="term" value="P:translation"/>
    <property type="evidence" value="ECO:0007669"/>
    <property type="project" value="UniProtKB-UniRule"/>
</dbReference>
<dbReference type="CDD" id="cd00432">
    <property type="entry name" value="Ribosomal_L18_L5e"/>
    <property type="match status" value="1"/>
</dbReference>
<dbReference type="FunFam" id="3.30.420.100:FF:000001">
    <property type="entry name" value="50S ribosomal protein L18"/>
    <property type="match status" value="1"/>
</dbReference>
<dbReference type="Gene3D" id="3.30.420.100">
    <property type="match status" value="1"/>
</dbReference>
<dbReference type="HAMAP" id="MF_01337_B">
    <property type="entry name" value="Ribosomal_uL18_B"/>
    <property type="match status" value="1"/>
</dbReference>
<dbReference type="InterPro" id="IPR004389">
    <property type="entry name" value="Ribosomal_uL18_bac-type"/>
</dbReference>
<dbReference type="InterPro" id="IPR005484">
    <property type="entry name" value="Ribosomal_uL18_bac/euk"/>
</dbReference>
<dbReference type="NCBIfam" id="TIGR00060">
    <property type="entry name" value="L18_bact"/>
    <property type="match status" value="1"/>
</dbReference>
<dbReference type="PANTHER" id="PTHR12899">
    <property type="entry name" value="39S RIBOSOMAL PROTEIN L18, MITOCHONDRIAL"/>
    <property type="match status" value="1"/>
</dbReference>
<dbReference type="PANTHER" id="PTHR12899:SF3">
    <property type="entry name" value="LARGE RIBOSOMAL SUBUNIT PROTEIN UL18M"/>
    <property type="match status" value="1"/>
</dbReference>
<dbReference type="Pfam" id="PF00861">
    <property type="entry name" value="Ribosomal_L18p"/>
    <property type="match status" value="1"/>
</dbReference>
<dbReference type="SUPFAM" id="SSF53137">
    <property type="entry name" value="Translational machinery components"/>
    <property type="match status" value="1"/>
</dbReference>
<sequence>MFKKNDRSQSRERRHMRVRKKIFGTAERPRLSVYRSEKHIYAQLIDDIEGKTLVAASSAEKGFDGVGSNKEGAKLVGKMVAEKALEKGLKKVVFDRGGFIYHGRIKELAEGAREAGLDF</sequence>
<organism>
    <name type="scientific">Clostridium botulinum (strain 657 / Type Ba4)</name>
    <dbReference type="NCBI Taxonomy" id="515621"/>
    <lineage>
        <taxon>Bacteria</taxon>
        <taxon>Bacillati</taxon>
        <taxon>Bacillota</taxon>
        <taxon>Clostridia</taxon>
        <taxon>Eubacteriales</taxon>
        <taxon>Clostridiaceae</taxon>
        <taxon>Clostridium</taxon>
    </lineage>
</organism>
<keyword id="KW-0687">Ribonucleoprotein</keyword>
<keyword id="KW-0689">Ribosomal protein</keyword>
<keyword id="KW-0694">RNA-binding</keyword>
<keyword id="KW-0699">rRNA-binding</keyword>
<evidence type="ECO:0000255" key="1">
    <source>
        <dbReference type="HAMAP-Rule" id="MF_01337"/>
    </source>
</evidence>
<evidence type="ECO:0000305" key="2"/>
<feature type="chain" id="PRO_1000214665" description="Large ribosomal subunit protein uL18">
    <location>
        <begin position="1"/>
        <end position="119"/>
    </location>
</feature>
<reference key="1">
    <citation type="submission" date="2008-05" db="EMBL/GenBank/DDBJ databases">
        <title>Genome sequence of Clostridium botulinum Ba4 strain 657.</title>
        <authorList>
            <person name="Shrivastava S."/>
            <person name="Brown J.L."/>
            <person name="Bruce D."/>
            <person name="Detter C."/>
            <person name="Munk C."/>
            <person name="Smith L.A."/>
            <person name="Smith T.J."/>
            <person name="Sutton G."/>
            <person name="Brettin T.S."/>
        </authorList>
    </citation>
    <scope>NUCLEOTIDE SEQUENCE [LARGE SCALE GENOMIC DNA]</scope>
    <source>
        <strain>657 / Type Ba4</strain>
    </source>
</reference>
<name>RL18_CLOB6</name>
<gene>
    <name evidence="1" type="primary">rplR</name>
    <name type="ordered locus">CLJ_B3773</name>
</gene>
<comment type="function">
    <text evidence="1">This is one of the proteins that bind and probably mediate the attachment of the 5S RNA into the large ribosomal subunit, where it forms part of the central protuberance.</text>
</comment>
<comment type="subunit">
    <text evidence="1">Part of the 50S ribosomal subunit; part of the 5S rRNA/L5/L18/L25 subcomplex. Contacts the 5S and 23S rRNAs.</text>
</comment>
<comment type="similarity">
    <text evidence="1">Belongs to the universal ribosomal protein uL18 family.</text>
</comment>
<proteinExistence type="inferred from homology"/>
<accession>C3KVN5</accession>